<dbReference type="EC" id="6.3.5.7" evidence="1"/>
<dbReference type="EMBL" id="BA000033">
    <property type="protein sequence ID" value="BAB95706.1"/>
    <property type="molecule type" value="Genomic_DNA"/>
</dbReference>
<dbReference type="RefSeq" id="WP_000027917.1">
    <property type="nucleotide sequence ID" value="NC_003923.1"/>
</dbReference>
<dbReference type="SMR" id="Q8NVT3"/>
<dbReference type="KEGG" id="sam:MW1841"/>
<dbReference type="HOGENOM" id="CLU_009600_0_3_9"/>
<dbReference type="GO" id="GO:0030956">
    <property type="term" value="C:glutamyl-tRNA(Gln) amidotransferase complex"/>
    <property type="evidence" value="ECO:0007669"/>
    <property type="project" value="InterPro"/>
</dbReference>
<dbReference type="GO" id="GO:0005524">
    <property type="term" value="F:ATP binding"/>
    <property type="evidence" value="ECO:0007669"/>
    <property type="project" value="UniProtKB-KW"/>
</dbReference>
<dbReference type="GO" id="GO:0050567">
    <property type="term" value="F:glutaminyl-tRNA synthase (glutamine-hydrolyzing) activity"/>
    <property type="evidence" value="ECO:0007669"/>
    <property type="project" value="UniProtKB-UniRule"/>
</dbReference>
<dbReference type="GO" id="GO:0006412">
    <property type="term" value="P:translation"/>
    <property type="evidence" value="ECO:0007669"/>
    <property type="project" value="UniProtKB-UniRule"/>
</dbReference>
<dbReference type="Gene3D" id="3.90.1300.10">
    <property type="entry name" value="Amidase signature (AS) domain"/>
    <property type="match status" value="1"/>
</dbReference>
<dbReference type="HAMAP" id="MF_00120">
    <property type="entry name" value="GatA"/>
    <property type="match status" value="1"/>
</dbReference>
<dbReference type="InterPro" id="IPR000120">
    <property type="entry name" value="Amidase"/>
</dbReference>
<dbReference type="InterPro" id="IPR020556">
    <property type="entry name" value="Amidase_CS"/>
</dbReference>
<dbReference type="InterPro" id="IPR023631">
    <property type="entry name" value="Amidase_dom"/>
</dbReference>
<dbReference type="InterPro" id="IPR036928">
    <property type="entry name" value="AS_sf"/>
</dbReference>
<dbReference type="InterPro" id="IPR004412">
    <property type="entry name" value="GatA"/>
</dbReference>
<dbReference type="NCBIfam" id="TIGR00132">
    <property type="entry name" value="gatA"/>
    <property type="match status" value="1"/>
</dbReference>
<dbReference type="PANTHER" id="PTHR11895:SF151">
    <property type="entry name" value="GLUTAMYL-TRNA(GLN) AMIDOTRANSFERASE SUBUNIT A"/>
    <property type="match status" value="1"/>
</dbReference>
<dbReference type="PANTHER" id="PTHR11895">
    <property type="entry name" value="TRANSAMIDASE"/>
    <property type="match status" value="1"/>
</dbReference>
<dbReference type="Pfam" id="PF01425">
    <property type="entry name" value="Amidase"/>
    <property type="match status" value="1"/>
</dbReference>
<dbReference type="SUPFAM" id="SSF75304">
    <property type="entry name" value="Amidase signature (AS) enzymes"/>
    <property type="match status" value="1"/>
</dbReference>
<dbReference type="PROSITE" id="PS00571">
    <property type="entry name" value="AMIDASES"/>
    <property type="match status" value="1"/>
</dbReference>
<name>GATA_STAAW</name>
<feature type="chain" id="PRO_0000105204" description="Glutamyl-tRNA(Gln) amidotransferase subunit A">
    <location>
        <begin position="1"/>
        <end position="485"/>
    </location>
</feature>
<feature type="active site" description="Charge relay system" evidence="1">
    <location>
        <position position="79"/>
    </location>
</feature>
<feature type="active site" description="Charge relay system" evidence="1">
    <location>
        <position position="154"/>
    </location>
</feature>
<feature type="active site" description="Acyl-ester intermediate" evidence="1">
    <location>
        <position position="178"/>
    </location>
</feature>
<evidence type="ECO:0000255" key="1">
    <source>
        <dbReference type="HAMAP-Rule" id="MF_00120"/>
    </source>
</evidence>
<accession>Q8NVT3</accession>
<gene>
    <name evidence="1" type="primary">gatA</name>
    <name type="ordered locus">MW1841</name>
</gene>
<reference key="1">
    <citation type="journal article" date="2002" name="Lancet">
        <title>Genome and virulence determinants of high virulence community-acquired MRSA.</title>
        <authorList>
            <person name="Baba T."/>
            <person name="Takeuchi F."/>
            <person name="Kuroda M."/>
            <person name="Yuzawa H."/>
            <person name="Aoki K."/>
            <person name="Oguchi A."/>
            <person name="Nagai Y."/>
            <person name="Iwama N."/>
            <person name="Asano K."/>
            <person name="Naimi T."/>
            <person name="Kuroda H."/>
            <person name="Cui L."/>
            <person name="Yamamoto K."/>
            <person name="Hiramatsu K."/>
        </authorList>
    </citation>
    <scope>NUCLEOTIDE SEQUENCE [LARGE SCALE GENOMIC DNA]</scope>
    <source>
        <strain>MW2</strain>
    </source>
</reference>
<keyword id="KW-0067">ATP-binding</keyword>
<keyword id="KW-0436">Ligase</keyword>
<keyword id="KW-0547">Nucleotide-binding</keyword>
<keyword id="KW-0648">Protein biosynthesis</keyword>
<protein>
    <recommendedName>
        <fullName evidence="1">Glutamyl-tRNA(Gln) amidotransferase subunit A</fullName>
        <shortName evidence="1">Glu-ADT subunit A</shortName>
        <ecNumber evidence="1">6.3.5.7</ecNumber>
    </recommendedName>
</protein>
<organism>
    <name type="scientific">Staphylococcus aureus (strain MW2)</name>
    <dbReference type="NCBI Taxonomy" id="196620"/>
    <lineage>
        <taxon>Bacteria</taxon>
        <taxon>Bacillati</taxon>
        <taxon>Bacillota</taxon>
        <taxon>Bacilli</taxon>
        <taxon>Bacillales</taxon>
        <taxon>Staphylococcaceae</taxon>
        <taxon>Staphylococcus</taxon>
    </lineage>
</organism>
<comment type="function">
    <text evidence="1">Allows the formation of correctly charged Gln-tRNA(Gln) through the transamidation of misacylated Glu-tRNA(Gln) in organisms which lack glutaminyl-tRNA synthetase. The reaction takes place in the presence of glutamine and ATP through an activated gamma-phospho-Glu-tRNA(Gln).</text>
</comment>
<comment type="catalytic activity">
    <reaction evidence="1">
        <text>L-glutamyl-tRNA(Gln) + L-glutamine + ATP + H2O = L-glutaminyl-tRNA(Gln) + L-glutamate + ADP + phosphate + H(+)</text>
        <dbReference type="Rhea" id="RHEA:17521"/>
        <dbReference type="Rhea" id="RHEA-COMP:9681"/>
        <dbReference type="Rhea" id="RHEA-COMP:9684"/>
        <dbReference type="ChEBI" id="CHEBI:15377"/>
        <dbReference type="ChEBI" id="CHEBI:15378"/>
        <dbReference type="ChEBI" id="CHEBI:29985"/>
        <dbReference type="ChEBI" id="CHEBI:30616"/>
        <dbReference type="ChEBI" id="CHEBI:43474"/>
        <dbReference type="ChEBI" id="CHEBI:58359"/>
        <dbReference type="ChEBI" id="CHEBI:78520"/>
        <dbReference type="ChEBI" id="CHEBI:78521"/>
        <dbReference type="ChEBI" id="CHEBI:456216"/>
        <dbReference type="EC" id="6.3.5.7"/>
    </reaction>
</comment>
<comment type="subunit">
    <text evidence="1">Heterotrimer of A, B and C subunits.</text>
</comment>
<comment type="similarity">
    <text evidence="1">Belongs to the amidase family. GatA subfamily.</text>
</comment>
<sequence>MSIRYESVENLLTLIKDKKIKPSDVVKDIYDAIEETDPTIKSFLALDKENAIKKAQELDELQAKDQMDGKLFGIPMGIKDNIITNGLETTCASKMLEGFVPIYESTVMEKLHKENAVLIGKLNMDEFAMGGSTETSYFKKTVNPFDHKAVPGGSSGGSAAAVAAGLVPFSLGSDTGGSIRQPAAYCGVVGMKPTYGRVSRFGLVAFASSLDQIGPLTRNVKDNAIVLEAISGADVNDSTSAPVDDVDFTSEIGKDIKGLKVALPKEYLGEGVADDVKEAVQNAVETLKSLGAVVEEVSLPNTKFGIPSYYVIASSEASSNLSRFDGIRYGYHSKEAHSLEELYKMSRSEGFGKEVKRRIFLGTFALSSGYYDAYYKKSQKVRTLIKNDFDKVFENYDVVVGPTAPTTAFNLGEEIDDPLTMYANDLLTTPVNLAGLPGISVPCGQSNGRPIGLQFIGKPFDEKTLYRVAYQYETQYNLHDVYEKL</sequence>
<proteinExistence type="inferred from homology"/>